<comment type="function">
    <text evidence="1">Catalyzes the NAD(P)(+)-dependent oxidation of D-glucose to D-gluconate via gluconolactone. Can utilize both NAD(+) and NADP(+) as electron acceptor. Is involved in the degradation of glucose through a non-phosphorylative variant of the Entner-Doudoroff pathway.</text>
</comment>
<comment type="catalytic activity">
    <reaction evidence="1">
        <text>D-glucose + NAD(+) = D-glucono-1,5-lactone + NADH + H(+)</text>
        <dbReference type="Rhea" id="RHEA:14293"/>
        <dbReference type="ChEBI" id="CHEBI:4167"/>
        <dbReference type="ChEBI" id="CHEBI:15378"/>
        <dbReference type="ChEBI" id="CHEBI:16217"/>
        <dbReference type="ChEBI" id="CHEBI:57540"/>
        <dbReference type="ChEBI" id="CHEBI:57945"/>
        <dbReference type="EC" id="1.1.1.47"/>
    </reaction>
</comment>
<comment type="catalytic activity">
    <reaction evidence="1">
        <text>D-glucose + NADP(+) = D-glucono-1,5-lactone + NADPH + H(+)</text>
        <dbReference type="Rhea" id="RHEA:14405"/>
        <dbReference type="ChEBI" id="CHEBI:4167"/>
        <dbReference type="ChEBI" id="CHEBI:15378"/>
        <dbReference type="ChEBI" id="CHEBI:16217"/>
        <dbReference type="ChEBI" id="CHEBI:57783"/>
        <dbReference type="ChEBI" id="CHEBI:58349"/>
        <dbReference type="EC" id="1.1.1.47"/>
    </reaction>
</comment>
<comment type="cofactor">
    <cofactor evidence="1">
        <name>Zn(2+)</name>
        <dbReference type="ChEBI" id="CHEBI:29105"/>
    </cofactor>
    <text evidence="1">Binds 2 Zn(2+) ions per subunit. One of the zinc atoms is essential for catalytic activity while the other has a structural function.</text>
</comment>
<comment type="similarity">
    <text evidence="1">Belongs to the zinc-containing alcohol dehydrogenase family. Glucose 1-dehydrogenase subfamily.</text>
</comment>
<organism>
    <name type="scientific">Metallosphaera sedula (strain ATCC 51363 / DSM 5348 / JCM 9185 / NBRC 15509 / TH2)</name>
    <dbReference type="NCBI Taxonomy" id="399549"/>
    <lineage>
        <taxon>Archaea</taxon>
        <taxon>Thermoproteota</taxon>
        <taxon>Thermoprotei</taxon>
        <taxon>Sulfolobales</taxon>
        <taxon>Sulfolobaceae</taxon>
        <taxon>Metallosphaera</taxon>
    </lineage>
</organism>
<protein>
    <recommendedName>
        <fullName evidence="1">Glucose 1-dehydrogenase</fullName>
        <shortName evidence="1">GDH</shortName>
        <shortName evidence="1">GlcDH</shortName>
        <ecNumber evidence="1">1.1.1.47</ecNumber>
    </recommendedName>
</protein>
<dbReference type="EC" id="1.1.1.47" evidence="1"/>
<dbReference type="EMBL" id="CP000682">
    <property type="protein sequence ID" value="ABP95459.1"/>
    <property type="molecule type" value="Genomic_DNA"/>
</dbReference>
<dbReference type="RefSeq" id="WP_012021246.1">
    <property type="nucleotide sequence ID" value="NC_009440.1"/>
</dbReference>
<dbReference type="SMR" id="A4YGA7"/>
<dbReference type="STRING" id="399549.Msed_1301"/>
<dbReference type="GeneID" id="91755800"/>
<dbReference type="KEGG" id="mse:Msed_1301"/>
<dbReference type="eggNOG" id="arCOG01459">
    <property type="taxonomic scope" value="Archaea"/>
</dbReference>
<dbReference type="HOGENOM" id="CLU_026673_1_0_2"/>
<dbReference type="Proteomes" id="UP000000242">
    <property type="component" value="Chromosome"/>
</dbReference>
<dbReference type="GO" id="GO:0005536">
    <property type="term" value="F:D-glucose binding"/>
    <property type="evidence" value="ECO:0007669"/>
    <property type="project" value="UniProtKB-UniRule"/>
</dbReference>
<dbReference type="GO" id="GO:0047934">
    <property type="term" value="F:glucose 1-dehydrogenase (NAD+) activity"/>
    <property type="evidence" value="ECO:0007669"/>
    <property type="project" value="RHEA"/>
</dbReference>
<dbReference type="GO" id="GO:0047935">
    <property type="term" value="F:glucose 1-dehydrogenase (NADP+) activity"/>
    <property type="evidence" value="ECO:0007669"/>
    <property type="project" value="RHEA"/>
</dbReference>
<dbReference type="GO" id="GO:0070403">
    <property type="term" value="F:NAD+ binding"/>
    <property type="evidence" value="ECO:0007669"/>
    <property type="project" value="UniProtKB-UniRule"/>
</dbReference>
<dbReference type="GO" id="GO:0070401">
    <property type="term" value="F:NADP+ binding"/>
    <property type="evidence" value="ECO:0007669"/>
    <property type="project" value="UniProtKB-UniRule"/>
</dbReference>
<dbReference type="GO" id="GO:0008270">
    <property type="term" value="F:zinc ion binding"/>
    <property type="evidence" value="ECO:0007669"/>
    <property type="project" value="UniProtKB-UniRule"/>
</dbReference>
<dbReference type="GO" id="GO:0019595">
    <property type="term" value="P:non-phosphorylated glucose catabolic process"/>
    <property type="evidence" value="ECO:0007669"/>
    <property type="project" value="UniProtKB-UniRule"/>
</dbReference>
<dbReference type="GO" id="GO:0051262">
    <property type="term" value="P:protein tetramerization"/>
    <property type="evidence" value="ECO:0007669"/>
    <property type="project" value="UniProtKB-ARBA"/>
</dbReference>
<dbReference type="CDD" id="cd08230">
    <property type="entry name" value="glucose_DH"/>
    <property type="match status" value="1"/>
</dbReference>
<dbReference type="Gene3D" id="3.90.180.10">
    <property type="entry name" value="Medium-chain alcohol dehydrogenases, catalytic domain"/>
    <property type="match status" value="1"/>
</dbReference>
<dbReference type="Gene3D" id="3.40.50.720">
    <property type="entry name" value="NAD(P)-binding Rossmann-like Domain"/>
    <property type="match status" value="1"/>
</dbReference>
<dbReference type="HAMAP" id="MF_02127">
    <property type="entry name" value="Glucose_DH"/>
    <property type="match status" value="1"/>
</dbReference>
<dbReference type="InterPro" id="IPR013154">
    <property type="entry name" value="ADH-like_N"/>
</dbReference>
<dbReference type="InterPro" id="IPR026583">
    <property type="entry name" value="Glc_1-DH_arc"/>
</dbReference>
<dbReference type="InterPro" id="IPR031640">
    <property type="entry name" value="Glu_dehyd_C"/>
</dbReference>
<dbReference type="InterPro" id="IPR011032">
    <property type="entry name" value="GroES-like_sf"/>
</dbReference>
<dbReference type="InterPro" id="IPR036291">
    <property type="entry name" value="NAD(P)-bd_dom_sf"/>
</dbReference>
<dbReference type="InterPro" id="IPR050129">
    <property type="entry name" value="Zn_alcohol_dh"/>
</dbReference>
<dbReference type="PANTHER" id="PTHR43401">
    <property type="entry name" value="L-THREONINE 3-DEHYDROGENASE"/>
    <property type="match status" value="1"/>
</dbReference>
<dbReference type="PANTHER" id="PTHR43401:SF2">
    <property type="entry name" value="L-THREONINE 3-DEHYDROGENASE"/>
    <property type="match status" value="1"/>
</dbReference>
<dbReference type="Pfam" id="PF08240">
    <property type="entry name" value="ADH_N"/>
    <property type="match status" value="1"/>
</dbReference>
<dbReference type="Pfam" id="PF16912">
    <property type="entry name" value="Glu_dehyd_C"/>
    <property type="match status" value="1"/>
</dbReference>
<dbReference type="SUPFAM" id="SSF50129">
    <property type="entry name" value="GroES-like"/>
    <property type="match status" value="1"/>
</dbReference>
<dbReference type="SUPFAM" id="SSF51735">
    <property type="entry name" value="NAD(P)-binding Rossmann-fold domains"/>
    <property type="match status" value="1"/>
</dbReference>
<sequence length="358" mass="39611">MKAIIVRPPNEGVEVKDITLRESTDGKIVVRTRLSGLCGTDRGLVTGRLTFARPPPGYDFLILGHETLGEVVKGNGEFSPGDLVVPVVRRGCGSCLNCMLGRQDFCETGRFTEIGIRGAHGTMREEFLEDPKYLVRVPRELGDEGVLLEPLSNVVKALTEMEYLQRRSWWRCDDSTYSCRTAVVLGSGPIGLLFSMALRSMGFRVIVANRRPPSQVESEITRDIGATFLNTSEHEDLEPDLIVDTSGHPSAVVPLLPRIRKNGAVILFGTTGLERYELTAEEITMLVENNILIFGSVNASKADFQAGVNLLVEWKARYPGVLQRMITKRVSVEEAPQVLKEKVPGEIKTVIDWTARES</sequence>
<name>GLCDH_METS5</name>
<accession>A4YGA7</accession>
<feature type="chain" id="PRO_0000414835" description="Glucose 1-dehydrogenase">
    <location>
        <begin position="1"/>
        <end position="358"/>
    </location>
</feature>
<feature type="binding site" evidence="1">
    <location>
        <position position="38"/>
    </location>
    <ligand>
        <name>Zn(2+)</name>
        <dbReference type="ChEBI" id="CHEBI:29105"/>
        <label>1</label>
        <note>catalytic</note>
    </ligand>
</feature>
<feature type="binding site" evidence="1">
    <location>
        <position position="40"/>
    </location>
    <ligand>
        <name>substrate</name>
    </ligand>
</feature>
<feature type="binding site" evidence="1">
    <location>
        <position position="65"/>
    </location>
    <ligand>
        <name>Zn(2+)</name>
        <dbReference type="ChEBI" id="CHEBI:29105"/>
        <label>1</label>
        <note>catalytic</note>
    </ligand>
</feature>
<feature type="binding site" evidence="1">
    <location>
        <position position="66"/>
    </location>
    <ligand>
        <name>Zn(2+)</name>
        <dbReference type="ChEBI" id="CHEBI:29105"/>
        <label>1</label>
        <note>catalytic</note>
    </ligand>
</feature>
<feature type="binding site" evidence="1">
    <location>
        <position position="92"/>
    </location>
    <ligand>
        <name>Zn(2+)</name>
        <dbReference type="ChEBI" id="CHEBI:29105"/>
        <label>2</label>
        <note>structural</note>
    </ligand>
</feature>
<feature type="binding site" evidence="1">
    <location>
        <position position="95"/>
    </location>
    <ligand>
        <name>Zn(2+)</name>
        <dbReference type="ChEBI" id="CHEBI:29105"/>
        <label>2</label>
        <note>structural</note>
    </ligand>
</feature>
<feature type="binding site" evidence="1">
    <location>
        <position position="98"/>
    </location>
    <ligand>
        <name>Zn(2+)</name>
        <dbReference type="ChEBI" id="CHEBI:29105"/>
        <label>2</label>
        <note>structural</note>
    </ligand>
</feature>
<feature type="binding site" evidence="1">
    <location>
        <position position="106"/>
    </location>
    <ligand>
        <name>Zn(2+)</name>
        <dbReference type="ChEBI" id="CHEBI:29105"/>
        <label>2</label>
        <note>structural</note>
    </ligand>
</feature>
<feature type="binding site" evidence="1">
    <location>
        <position position="113"/>
    </location>
    <ligand>
        <name>substrate</name>
    </ligand>
</feature>
<feature type="binding site" evidence="1">
    <location>
        <position position="149"/>
    </location>
    <ligand>
        <name>substrate</name>
    </ligand>
</feature>
<feature type="binding site" evidence="1">
    <location>
        <position position="149"/>
    </location>
    <ligand>
        <name>Zn(2+)</name>
        <dbReference type="ChEBI" id="CHEBI:29105"/>
        <label>1</label>
        <note>catalytic</note>
    </ligand>
</feature>
<feature type="binding site" evidence="1">
    <location>
        <position position="153"/>
    </location>
    <ligand>
        <name>substrate</name>
    </ligand>
</feature>
<feature type="binding site" evidence="1">
    <location>
        <begin position="187"/>
        <end position="190"/>
    </location>
    <ligand>
        <name>NADP(+)</name>
        <dbReference type="ChEBI" id="CHEBI:58349"/>
    </ligand>
</feature>
<feature type="binding site" evidence="1">
    <location>
        <begin position="209"/>
        <end position="211"/>
    </location>
    <ligand>
        <name>NADP(+)</name>
        <dbReference type="ChEBI" id="CHEBI:58349"/>
    </ligand>
</feature>
<feature type="binding site" evidence="1">
    <location>
        <begin position="268"/>
        <end position="270"/>
    </location>
    <ligand>
        <name>NADP(+)</name>
        <dbReference type="ChEBI" id="CHEBI:58349"/>
    </ligand>
</feature>
<feature type="binding site" evidence="1">
    <location>
        <begin position="296"/>
        <end position="298"/>
    </location>
    <ligand>
        <name>NADP(+)</name>
        <dbReference type="ChEBI" id="CHEBI:58349"/>
    </ligand>
</feature>
<feature type="binding site" evidence="1">
    <location>
        <position position="298"/>
    </location>
    <ligand>
        <name>substrate</name>
    </ligand>
</feature>
<feature type="binding site" evidence="1">
    <location>
        <position position="342"/>
    </location>
    <ligand>
        <name>NADP(+)</name>
        <dbReference type="ChEBI" id="CHEBI:58349"/>
    </ligand>
</feature>
<proteinExistence type="inferred from homology"/>
<gene>
    <name evidence="1" type="primary">gdh</name>
    <name type="ordered locus">Msed_1301</name>
</gene>
<keyword id="KW-0119">Carbohydrate metabolism</keyword>
<keyword id="KW-0479">Metal-binding</keyword>
<keyword id="KW-0520">NAD</keyword>
<keyword id="KW-0521">NADP</keyword>
<keyword id="KW-0547">Nucleotide-binding</keyword>
<keyword id="KW-0560">Oxidoreductase</keyword>
<keyword id="KW-1185">Reference proteome</keyword>
<keyword id="KW-0862">Zinc</keyword>
<reference key="1">
    <citation type="journal article" date="2008" name="Appl. Environ. Microbiol.">
        <title>The genome sequence of the metal-mobilizing, extremely thermoacidophilic archaeon Metallosphaera sedula provides insights into bioleaching-associated metabolism.</title>
        <authorList>
            <person name="Auernik K.S."/>
            <person name="Maezato Y."/>
            <person name="Blum P.H."/>
            <person name="Kelly R.M."/>
        </authorList>
    </citation>
    <scope>NUCLEOTIDE SEQUENCE [LARGE SCALE GENOMIC DNA]</scope>
    <source>
        <strain>ATCC 51363 / DSM 5348 / JCM 9185 / NBRC 15509 / TH2</strain>
    </source>
</reference>
<evidence type="ECO:0000255" key="1">
    <source>
        <dbReference type="HAMAP-Rule" id="MF_02127"/>
    </source>
</evidence>